<organism>
    <name type="scientific">Shigella flexneri</name>
    <dbReference type="NCBI Taxonomy" id="623"/>
    <lineage>
        <taxon>Bacteria</taxon>
        <taxon>Pseudomonadati</taxon>
        <taxon>Pseudomonadota</taxon>
        <taxon>Gammaproteobacteria</taxon>
        <taxon>Enterobacterales</taxon>
        <taxon>Enterobacteriaceae</taxon>
        <taxon>Shigella</taxon>
    </lineage>
</organism>
<evidence type="ECO:0000255" key="1"/>
<evidence type="ECO:0000255" key="2">
    <source>
        <dbReference type="HAMAP-Rule" id="MF_01413"/>
    </source>
</evidence>
<evidence type="ECO:0000255" key="3">
    <source>
        <dbReference type="PROSITE-ProRule" id="PRU00543"/>
    </source>
</evidence>
<evidence type="ECO:0000256" key="4">
    <source>
        <dbReference type="SAM" id="MobiDB-lite"/>
    </source>
</evidence>
<gene>
    <name evidence="2" type="primary">kefC</name>
    <name type="ordered locus">SF0044</name>
    <name type="ordered locus">S0046</name>
</gene>
<keyword id="KW-0050">Antiport</keyword>
<keyword id="KW-0997">Cell inner membrane</keyword>
<keyword id="KW-1003">Cell membrane</keyword>
<keyword id="KW-0406">Ion transport</keyword>
<keyword id="KW-0472">Membrane</keyword>
<keyword id="KW-0630">Potassium</keyword>
<keyword id="KW-0633">Potassium transport</keyword>
<keyword id="KW-1185">Reference proteome</keyword>
<keyword id="KW-0812">Transmembrane</keyword>
<keyword id="KW-1133">Transmembrane helix</keyword>
<keyword id="KW-0813">Transport</keyword>
<reference key="1">
    <citation type="journal article" date="2002" name="Nucleic Acids Res.">
        <title>Genome sequence of Shigella flexneri 2a: insights into pathogenicity through comparison with genomes of Escherichia coli K12 and O157.</title>
        <authorList>
            <person name="Jin Q."/>
            <person name="Yuan Z."/>
            <person name="Xu J."/>
            <person name="Wang Y."/>
            <person name="Shen Y."/>
            <person name="Lu W."/>
            <person name="Wang J."/>
            <person name="Liu H."/>
            <person name="Yang J."/>
            <person name="Yang F."/>
            <person name="Zhang X."/>
            <person name="Zhang J."/>
            <person name="Yang G."/>
            <person name="Wu H."/>
            <person name="Qu D."/>
            <person name="Dong J."/>
            <person name="Sun L."/>
            <person name="Xue Y."/>
            <person name="Zhao A."/>
            <person name="Gao Y."/>
            <person name="Zhu J."/>
            <person name="Kan B."/>
            <person name="Ding K."/>
            <person name="Chen S."/>
            <person name="Cheng H."/>
            <person name="Yao Z."/>
            <person name="He B."/>
            <person name="Chen R."/>
            <person name="Ma D."/>
            <person name="Qiang B."/>
            <person name="Wen Y."/>
            <person name="Hou Y."/>
            <person name="Yu J."/>
        </authorList>
    </citation>
    <scope>NUCLEOTIDE SEQUENCE [LARGE SCALE GENOMIC DNA]</scope>
    <source>
        <strain>301 / Serotype 2a</strain>
    </source>
</reference>
<reference key="2">
    <citation type="journal article" date="2003" name="Infect. Immun.">
        <title>Complete genome sequence and comparative genomics of Shigella flexneri serotype 2a strain 2457T.</title>
        <authorList>
            <person name="Wei J."/>
            <person name="Goldberg M.B."/>
            <person name="Burland V."/>
            <person name="Venkatesan M.M."/>
            <person name="Deng W."/>
            <person name="Fournier G."/>
            <person name="Mayhew G.F."/>
            <person name="Plunkett G. III"/>
            <person name="Rose D.J."/>
            <person name="Darling A."/>
            <person name="Mau B."/>
            <person name="Perna N.T."/>
            <person name="Payne S.M."/>
            <person name="Runyen-Janecky L.J."/>
            <person name="Zhou S."/>
            <person name="Schwartz D.C."/>
            <person name="Blattner F.R."/>
        </authorList>
    </citation>
    <scope>NUCLEOTIDE SEQUENCE [LARGE SCALE GENOMIC DNA]</scope>
    <source>
        <strain>ATCC 700930 / 2457T / Serotype 2a</strain>
    </source>
</reference>
<accession>Q83SQ3</accession>
<proteinExistence type="inferred from homology"/>
<dbReference type="EMBL" id="AE005674">
    <property type="protein sequence ID" value="AAN41710.1"/>
    <property type="molecule type" value="Genomic_DNA"/>
</dbReference>
<dbReference type="EMBL" id="AE014073">
    <property type="protein sequence ID" value="AAP15590.1"/>
    <property type="molecule type" value="Genomic_DNA"/>
</dbReference>
<dbReference type="RefSeq" id="NP_706003.1">
    <property type="nucleotide sequence ID" value="NC_004337.2"/>
</dbReference>
<dbReference type="RefSeq" id="WP_000377186.1">
    <property type="nucleotide sequence ID" value="NZ_WPGW01000005.1"/>
</dbReference>
<dbReference type="SMR" id="Q83SQ3"/>
<dbReference type="STRING" id="198214.SF0044"/>
<dbReference type="PaxDb" id="198214-SF0044"/>
<dbReference type="GeneID" id="1024570"/>
<dbReference type="KEGG" id="sfl:SF0044"/>
<dbReference type="KEGG" id="sfx:S0046"/>
<dbReference type="PATRIC" id="fig|198214.7.peg.52"/>
<dbReference type="HOGENOM" id="CLU_005126_9_3_6"/>
<dbReference type="Proteomes" id="UP000001006">
    <property type="component" value="Chromosome"/>
</dbReference>
<dbReference type="Proteomes" id="UP000002673">
    <property type="component" value="Chromosome"/>
</dbReference>
<dbReference type="GO" id="GO:0005886">
    <property type="term" value="C:plasma membrane"/>
    <property type="evidence" value="ECO:0007669"/>
    <property type="project" value="UniProtKB-SubCell"/>
</dbReference>
<dbReference type="GO" id="GO:0019899">
    <property type="term" value="F:enzyme binding"/>
    <property type="evidence" value="ECO:0007669"/>
    <property type="project" value="InterPro"/>
</dbReference>
<dbReference type="GO" id="GO:0015503">
    <property type="term" value="F:glutathione-regulated potassium exporter activity"/>
    <property type="evidence" value="ECO:0007669"/>
    <property type="project" value="UniProtKB-UniRule"/>
</dbReference>
<dbReference type="GO" id="GO:0015643">
    <property type="term" value="F:toxic substance binding"/>
    <property type="evidence" value="ECO:0007669"/>
    <property type="project" value="InterPro"/>
</dbReference>
<dbReference type="GO" id="GO:1902600">
    <property type="term" value="P:proton transmembrane transport"/>
    <property type="evidence" value="ECO:0007669"/>
    <property type="project" value="InterPro"/>
</dbReference>
<dbReference type="GO" id="GO:0051595">
    <property type="term" value="P:response to methylglyoxal"/>
    <property type="evidence" value="ECO:0007669"/>
    <property type="project" value="InterPro"/>
</dbReference>
<dbReference type="FunFam" id="1.20.1530.20:FF:000001">
    <property type="entry name" value="Glutathione-regulated potassium-efflux system protein KefB"/>
    <property type="match status" value="1"/>
</dbReference>
<dbReference type="FunFam" id="3.40.50.720:FF:000036">
    <property type="entry name" value="Glutathione-regulated potassium-efflux system protein KefB"/>
    <property type="match status" value="1"/>
</dbReference>
<dbReference type="Gene3D" id="1.20.1530.20">
    <property type="match status" value="1"/>
</dbReference>
<dbReference type="Gene3D" id="3.40.50.720">
    <property type="entry name" value="NAD(P)-binding Rossmann-like Domain"/>
    <property type="match status" value="1"/>
</dbReference>
<dbReference type="HAMAP" id="MF_01413">
    <property type="entry name" value="K_H_efflux_KefC"/>
    <property type="match status" value="1"/>
</dbReference>
<dbReference type="InterPro" id="IPR006153">
    <property type="entry name" value="Cation/H_exchanger_TM"/>
</dbReference>
<dbReference type="InterPro" id="IPR004771">
    <property type="entry name" value="K/H_exchanger"/>
</dbReference>
<dbReference type="InterPro" id="IPR023941">
    <property type="entry name" value="K_H_efflux_KefC"/>
</dbReference>
<dbReference type="InterPro" id="IPR006036">
    <property type="entry name" value="K_uptake_TrkA"/>
</dbReference>
<dbReference type="InterPro" id="IPR038770">
    <property type="entry name" value="Na+/solute_symporter_sf"/>
</dbReference>
<dbReference type="InterPro" id="IPR036291">
    <property type="entry name" value="NAD(P)-bd_dom_sf"/>
</dbReference>
<dbReference type="InterPro" id="IPR003148">
    <property type="entry name" value="RCK_N"/>
</dbReference>
<dbReference type="NCBIfam" id="TIGR00932">
    <property type="entry name" value="2a37"/>
    <property type="match status" value="1"/>
</dbReference>
<dbReference type="NCBIfam" id="NF002924">
    <property type="entry name" value="PRK03562.1"/>
    <property type="match status" value="1"/>
</dbReference>
<dbReference type="PANTHER" id="PTHR46157:SF3">
    <property type="entry name" value="GLUTATHIONE-REGULATED POTASSIUM-EFFLUX SYSTEM PROTEIN KEFC"/>
    <property type="match status" value="1"/>
</dbReference>
<dbReference type="PANTHER" id="PTHR46157">
    <property type="entry name" value="K(+) EFFLUX ANTIPORTER 3, CHLOROPLASTIC"/>
    <property type="match status" value="1"/>
</dbReference>
<dbReference type="Pfam" id="PF00999">
    <property type="entry name" value="Na_H_Exchanger"/>
    <property type="match status" value="1"/>
</dbReference>
<dbReference type="Pfam" id="PF02254">
    <property type="entry name" value="TrkA_N"/>
    <property type="match status" value="1"/>
</dbReference>
<dbReference type="PRINTS" id="PR00335">
    <property type="entry name" value="KUPTAKETRKA"/>
</dbReference>
<dbReference type="SUPFAM" id="SSF51735">
    <property type="entry name" value="NAD(P)-binding Rossmann-fold domains"/>
    <property type="match status" value="1"/>
</dbReference>
<dbReference type="PROSITE" id="PS51201">
    <property type="entry name" value="RCK_N"/>
    <property type="match status" value="1"/>
</dbReference>
<feature type="chain" id="PRO_0000196613" description="Glutathione-regulated potassium-efflux system protein KefC">
    <location>
        <begin position="1"/>
        <end position="620"/>
    </location>
</feature>
<feature type="topological domain" description="Periplasmic" evidence="1">
    <location>
        <begin position="1"/>
        <end position="3"/>
    </location>
</feature>
<feature type="transmembrane region" description="Helical" evidence="2">
    <location>
        <begin position="4"/>
        <end position="24"/>
    </location>
</feature>
<feature type="topological domain" description="Cytoplasmic" evidence="1">
    <location>
        <position position="25"/>
    </location>
</feature>
<feature type="transmembrane region" description="Helical" evidence="2">
    <location>
        <begin position="26"/>
        <end position="46"/>
    </location>
</feature>
<feature type="topological domain" description="Periplasmic" evidence="1">
    <location>
        <begin position="47"/>
        <end position="53"/>
    </location>
</feature>
<feature type="transmembrane region" description="Helical" evidence="2">
    <location>
        <begin position="54"/>
        <end position="74"/>
    </location>
</feature>
<feature type="topological domain" description="Cytoplasmic" evidence="1">
    <location>
        <begin position="75"/>
        <end position="89"/>
    </location>
</feature>
<feature type="transmembrane region" description="Helical" evidence="2">
    <location>
        <begin position="90"/>
        <end position="110"/>
    </location>
</feature>
<feature type="topological domain" description="Periplasmic" evidence="1">
    <location>
        <begin position="111"/>
        <end position="113"/>
    </location>
</feature>
<feature type="transmembrane region" description="Helical" evidence="2">
    <location>
        <begin position="114"/>
        <end position="134"/>
    </location>
</feature>
<feature type="topological domain" description="Cytoplasmic" evidence="1">
    <location>
        <begin position="135"/>
        <end position="148"/>
    </location>
</feature>
<feature type="transmembrane region" description="Helical" evidence="2">
    <location>
        <begin position="149"/>
        <end position="169"/>
    </location>
</feature>
<feature type="topological domain" description="Periplasmic" evidence="1">
    <location>
        <begin position="170"/>
        <end position="177"/>
    </location>
</feature>
<feature type="transmembrane region" description="Helical" evidence="2">
    <location>
        <begin position="178"/>
        <end position="198"/>
    </location>
</feature>
<feature type="topological domain" description="Cytoplasmic" evidence="1">
    <location>
        <begin position="199"/>
        <end position="213"/>
    </location>
</feature>
<feature type="transmembrane region" description="Helical" evidence="2">
    <location>
        <begin position="214"/>
        <end position="233"/>
    </location>
</feature>
<feature type="topological domain" description="Periplasmic" evidence="1">
    <location>
        <begin position="234"/>
        <end position="236"/>
    </location>
</feature>
<feature type="transmembrane region" description="Helical" evidence="2">
    <location>
        <begin position="237"/>
        <end position="254"/>
    </location>
</feature>
<feature type="topological domain" description="Cytoplasmic" evidence="1">
    <location>
        <begin position="255"/>
        <end position="269"/>
    </location>
</feature>
<feature type="transmembrane region" description="Helical" evidence="2">
    <location>
        <begin position="270"/>
        <end position="290"/>
    </location>
</feature>
<feature type="topological domain" description="Periplasmic" evidence="1">
    <location>
        <begin position="291"/>
        <end position="293"/>
    </location>
</feature>
<feature type="transmembrane region" description="Helical" evidence="2">
    <location>
        <begin position="294"/>
        <end position="314"/>
    </location>
</feature>
<feature type="topological domain" description="Cytoplasmic" evidence="1">
    <location>
        <begin position="315"/>
        <end position="326"/>
    </location>
</feature>
<feature type="transmembrane region" description="Helical" evidence="2">
    <location>
        <begin position="327"/>
        <end position="347"/>
    </location>
</feature>
<feature type="topological domain" description="Periplasmic" evidence="1">
    <location>
        <begin position="348"/>
        <end position="358"/>
    </location>
</feature>
<feature type="transmembrane region" description="Helical" evidence="2">
    <location>
        <begin position="359"/>
        <end position="379"/>
    </location>
</feature>
<feature type="topological domain" description="Cytoplasmic" evidence="1">
    <location>
        <begin position="380"/>
        <end position="620"/>
    </location>
</feature>
<feature type="domain" description="RCK N-terminal" evidence="3">
    <location>
        <begin position="399"/>
        <end position="518"/>
    </location>
</feature>
<feature type="region of interest" description="Disordered" evidence="4">
    <location>
        <begin position="597"/>
        <end position="620"/>
    </location>
</feature>
<comment type="function">
    <text evidence="2">Pore-forming subunit of a potassium efflux system that confers protection against electrophiles. Catalyzes K(+)/H(+) antiport.</text>
</comment>
<comment type="subunit">
    <text evidence="2">Homodimer. Interacts with the regulatory subunit KefF.</text>
</comment>
<comment type="subcellular location">
    <subcellularLocation>
        <location evidence="2">Cell inner membrane</location>
        <topology evidence="2">Multi-pass membrane protein</topology>
    </subcellularLocation>
</comment>
<comment type="similarity">
    <text evidence="2">Belongs to the monovalent cation:proton antiporter 2 (CPA2) transporter (TC 2.A.37) family. KefC subfamily.</text>
</comment>
<protein>
    <recommendedName>
        <fullName evidence="2">Glutathione-regulated potassium-efflux system protein KefC</fullName>
    </recommendedName>
    <alternativeName>
        <fullName evidence="2">K(+)/H(+) antiporter</fullName>
    </alternativeName>
</protein>
<name>KEFC_SHIFL</name>
<sequence>MDSHTLVQALIYLGSAALIVPIAVRLGLGSVLGYLIAGCIIGPWGLRLVTDAESILHFAEIGVVLMLFIIGLELDPQRLWKLRAAVFGGGALQMVICGGLLGLFCMLLGLRWQVAELIGMTLALSSTAIAMQAMNERNLMVTQMGRSAFAVLLFQDIAAIPLVAMIPLLAASSASTTMGAFALSALKVAGALVLVVLLGRYVTRPALRFVARSGLREVFSAVALFLVFGFGLLLEEVGLSMAMGAFLAGVLLASSEYRHALESDIEPFKGLLLGLFFIGVGMSIDFGTLIENPLRIVILLLGFLIIKIAMLWLIARPLQVPNKQRRWFAVLLGQGSEFAFVVFGAAQMANVLEPEWAKSLTLAVALSMAATPILLVILNRLEQSSTEEAREADEIDEEQPRVIIAGFGRFGQITGRLLLSSGVKMVVLDHDPDHIETLRKFGMKVFYGDATRMDLLESAGAAKAEVLINAIDDPQTNLQLTEMVKEHFPHLQIIARARDVDHYIRLRQAGVEKPERETFEGALKTGRLALESLGLGPYEARERADVFRRFNIQMVEEMAMVENDTKARAAVYKRTSAMLSEIITEDREHLSLIQRHGWQGTEEGKHTGNMADEPETKPSS</sequence>